<protein>
    <recommendedName>
        <fullName>Acid phosphatase</fullName>
        <ecNumber>3.1.3.2</ecNumber>
    </recommendedName>
</protein>
<gene>
    <name type="primary">pho1</name>
    <name type="ORF">SPBP4G3.02</name>
</gene>
<comment type="catalytic activity">
    <reaction>
        <text>a phosphate monoester + H2O = an alcohol + phosphate</text>
        <dbReference type="Rhea" id="RHEA:15017"/>
        <dbReference type="ChEBI" id="CHEBI:15377"/>
        <dbReference type="ChEBI" id="CHEBI:30879"/>
        <dbReference type="ChEBI" id="CHEBI:43474"/>
        <dbReference type="ChEBI" id="CHEBI:67140"/>
        <dbReference type="EC" id="3.1.3.2"/>
    </reaction>
</comment>
<comment type="subcellular location">
    <subcellularLocation>
        <location>Secreted</location>
        <location>Cell wall</location>
    </subcellularLocation>
</comment>
<comment type="induction">
    <text>Repressed by phosphate and weakly by thiamine.</text>
</comment>
<comment type="similarity">
    <text evidence="3">Belongs to the histidine acid phosphatase family.</text>
</comment>
<keyword id="KW-0134">Cell wall</keyword>
<keyword id="KW-0325">Glycoprotein</keyword>
<keyword id="KW-0378">Hydrolase</keyword>
<keyword id="KW-1185">Reference proteome</keyword>
<keyword id="KW-0964">Secreted</keyword>
<keyword id="KW-0732">Signal</keyword>
<evidence type="ECO:0000250" key="1"/>
<evidence type="ECO:0000255" key="2"/>
<evidence type="ECO:0000305" key="3"/>
<reference key="1">
    <citation type="journal article" date="1986" name="J. Biol. Chem.">
        <title>Isolation and characterization of the structural gene for secreted acid phosphatase from Schizosaccharomyces pombe.</title>
        <authorList>
            <person name="Elliott S."/>
            <person name="Chang C."/>
            <person name="Schweingruber M.E."/>
            <person name="Schaller J."/>
            <person name="Rickli E.E."/>
            <person name="Carbon J."/>
        </authorList>
    </citation>
    <scope>NUCLEOTIDE SEQUENCE [GENOMIC DNA]</scope>
</reference>
<reference key="2">
    <citation type="journal article" date="2002" name="Nature">
        <title>The genome sequence of Schizosaccharomyces pombe.</title>
        <authorList>
            <person name="Wood V."/>
            <person name="Gwilliam R."/>
            <person name="Rajandream M.A."/>
            <person name="Lyne M.H."/>
            <person name="Lyne R."/>
            <person name="Stewart A."/>
            <person name="Sgouros J.G."/>
            <person name="Peat N."/>
            <person name="Hayles J."/>
            <person name="Baker S.G."/>
            <person name="Basham D."/>
            <person name="Bowman S."/>
            <person name="Brooks K."/>
            <person name="Brown D."/>
            <person name="Brown S."/>
            <person name="Chillingworth T."/>
            <person name="Churcher C.M."/>
            <person name="Collins M."/>
            <person name="Connor R."/>
            <person name="Cronin A."/>
            <person name="Davis P."/>
            <person name="Feltwell T."/>
            <person name="Fraser A."/>
            <person name="Gentles S."/>
            <person name="Goble A."/>
            <person name="Hamlin N."/>
            <person name="Harris D.E."/>
            <person name="Hidalgo J."/>
            <person name="Hodgson G."/>
            <person name="Holroyd S."/>
            <person name="Hornsby T."/>
            <person name="Howarth S."/>
            <person name="Huckle E.J."/>
            <person name="Hunt S."/>
            <person name="Jagels K."/>
            <person name="James K.D."/>
            <person name="Jones L."/>
            <person name="Jones M."/>
            <person name="Leather S."/>
            <person name="McDonald S."/>
            <person name="McLean J."/>
            <person name="Mooney P."/>
            <person name="Moule S."/>
            <person name="Mungall K.L."/>
            <person name="Murphy L.D."/>
            <person name="Niblett D."/>
            <person name="Odell C."/>
            <person name="Oliver K."/>
            <person name="O'Neil S."/>
            <person name="Pearson D."/>
            <person name="Quail M.A."/>
            <person name="Rabbinowitsch E."/>
            <person name="Rutherford K.M."/>
            <person name="Rutter S."/>
            <person name="Saunders D."/>
            <person name="Seeger K."/>
            <person name="Sharp S."/>
            <person name="Skelton J."/>
            <person name="Simmonds M.N."/>
            <person name="Squares R."/>
            <person name="Squares S."/>
            <person name="Stevens K."/>
            <person name="Taylor K."/>
            <person name="Taylor R.G."/>
            <person name="Tivey A."/>
            <person name="Walsh S.V."/>
            <person name="Warren T."/>
            <person name="Whitehead S."/>
            <person name="Woodward J.R."/>
            <person name="Volckaert G."/>
            <person name="Aert R."/>
            <person name="Robben J."/>
            <person name="Grymonprez B."/>
            <person name="Weltjens I."/>
            <person name="Vanstreels E."/>
            <person name="Rieger M."/>
            <person name="Schaefer M."/>
            <person name="Mueller-Auer S."/>
            <person name="Gabel C."/>
            <person name="Fuchs M."/>
            <person name="Duesterhoeft A."/>
            <person name="Fritzc C."/>
            <person name="Holzer E."/>
            <person name="Moestl D."/>
            <person name="Hilbert H."/>
            <person name="Borzym K."/>
            <person name="Langer I."/>
            <person name="Beck A."/>
            <person name="Lehrach H."/>
            <person name="Reinhardt R."/>
            <person name="Pohl T.M."/>
            <person name="Eger P."/>
            <person name="Zimmermann W."/>
            <person name="Wedler H."/>
            <person name="Wambutt R."/>
            <person name="Purnelle B."/>
            <person name="Goffeau A."/>
            <person name="Cadieu E."/>
            <person name="Dreano S."/>
            <person name="Gloux S."/>
            <person name="Lelaure V."/>
            <person name="Mottier S."/>
            <person name="Galibert F."/>
            <person name="Aves S.J."/>
            <person name="Xiang Z."/>
            <person name="Hunt C."/>
            <person name="Moore K."/>
            <person name="Hurst S.M."/>
            <person name="Lucas M."/>
            <person name="Rochet M."/>
            <person name="Gaillardin C."/>
            <person name="Tallada V.A."/>
            <person name="Garzon A."/>
            <person name="Thode G."/>
            <person name="Daga R.R."/>
            <person name="Cruzado L."/>
            <person name="Jimenez J."/>
            <person name="Sanchez M."/>
            <person name="del Rey F."/>
            <person name="Benito J."/>
            <person name="Dominguez A."/>
            <person name="Revuelta J.L."/>
            <person name="Moreno S."/>
            <person name="Armstrong J."/>
            <person name="Forsburg S.L."/>
            <person name="Cerutti L."/>
            <person name="Lowe T."/>
            <person name="McCombie W.R."/>
            <person name="Paulsen I."/>
            <person name="Potashkin J."/>
            <person name="Shpakovski G.V."/>
            <person name="Ussery D."/>
            <person name="Barrell B.G."/>
            <person name="Nurse P."/>
        </authorList>
    </citation>
    <scope>NUCLEOTIDE SEQUENCE [LARGE SCALE GENOMIC DNA]</scope>
    <source>
        <strain>972 / ATCC 24843</strain>
    </source>
</reference>
<reference key="3">
    <citation type="journal article" date="2000" name="Genes Cells">
        <title>Large-scale screening of intracellular protein localization in living fission yeast cells by the use of a GFP-fusion genomic DNA library.</title>
        <authorList>
            <person name="Ding D.-Q."/>
            <person name="Tomita Y."/>
            <person name="Yamamoto A."/>
            <person name="Chikashige Y."/>
            <person name="Haraguchi T."/>
            <person name="Hiraoka Y."/>
        </authorList>
    </citation>
    <scope>NUCLEOTIDE SEQUENCE [LARGE SCALE GENOMIC DNA] OF 88-285</scope>
    <source>
        <strain>ATCC 38364 / 968</strain>
    </source>
</reference>
<accession>P08091</accession>
<accession>Q9UTX1</accession>
<sequence>MFLQNLFLGFLAVVCANAQFAEFTAFDGKFDFKEHLTSRSPYHKPYFYGPSIDFPTTCKIKQVHTLQRHGSRNPTGGNAAFDAVGIANFQQRLLNGSVPIDYSVSGNPLSFVPTWTPVIEAANADALSSSGRVELFDMGRQFYERYHELFNASTYNIYTAAQQRVVDSALWYGYGMFGEDVHNFTNYILVSENATAGSNSLSSYNACPASDADDFTTPALEAWRNVYMPPIRQRLNPYFSNYNLTNDDILNLYGICSYEIALQDYSEFCKLFNSVDFLNFEYEGDLSFSYGMGNSVKWGSIFGGAYANSLANSLRSVENNTQQVFFAFTHDANIIPVETALGFFTDNTPENPLPTSYQVHSHSMKASEFVPFAGNLITELFQCEDSKYYVRHLVNEEVFPLSDCGFGPSNTSDGMCELYAYLNSPVRVNGTSNGIQNFDTLCNASAVAAVYPY</sequence>
<organism>
    <name type="scientific">Schizosaccharomyces pombe (strain 972 / ATCC 24843)</name>
    <name type="common">Fission yeast</name>
    <dbReference type="NCBI Taxonomy" id="284812"/>
    <lineage>
        <taxon>Eukaryota</taxon>
        <taxon>Fungi</taxon>
        <taxon>Dikarya</taxon>
        <taxon>Ascomycota</taxon>
        <taxon>Taphrinomycotina</taxon>
        <taxon>Schizosaccharomycetes</taxon>
        <taxon>Schizosaccharomycetales</taxon>
        <taxon>Schizosaccharomycetaceae</taxon>
        <taxon>Schizosaccharomyces</taxon>
    </lineage>
</organism>
<name>PPA1_SCHPO</name>
<feature type="signal peptide">
    <location>
        <begin position="1"/>
        <end position="18"/>
    </location>
</feature>
<feature type="chain" id="PRO_0000023951" description="Acid phosphatase">
    <location>
        <begin position="19"/>
        <end position="453"/>
    </location>
</feature>
<feature type="active site" description="Nucleophile" evidence="1">
    <location>
        <position position="69"/>
    </location>
</feature>
<feature type="active site" description="Proton donor" evidence="1">
    <location>
        <position position="331"/>
    </location>
</feature>
<feature type="glycosylation site" description="N-linked (GlcNAc...) asparagine" evidence="2">
    <location>
        <position position="95"/>
    </location>
</feature>
<feature type="glycosylation site" description="N-linked (GlcNAc...) asparagine" evidence="2">
    <location>
        <position position="151"/>
    </location>
</feature>
<feature type="glycosylation site" description="N-linked (GlcNAc...) asparagine" evidence="2">
    <location>
        <position position="183"/>
    </location>
</feature>
<feature type="glycosylation site" description="N-linked (GlcNAc...) asparagine" evidence="2">
    <location>
        <position position="193"/>
    </location>
</feature>
<feature type="glycosylation site" description="N-linked (GlcNAc...) asparagine" evidence="2">
    <location>
        <position position="243"/>
    </location>
</feature>
<feature type="glycosylation site" description="N-linked (GlcNAc...) asparagine" evidence="2">
    <location>
        <position position="319"/>
    </location>
</feature>
<feature type="glycosylation site" description="N-linked (GlcNAc...) asparagine" evidence="2">
    <location>
        <position position="410"/>
    </location>
</feature>
<feature type="glycosylation site" description="N-linked (GlcNAc...) asparagine" evidence="2">
    <location>
        <position position="429"/>
    </location>
</feature>
<feature type="glycosylation site" description="N-linked (GlcNAc...) asparagine" evidence="2">
    <location>
        <position position="443"/>
    </location>
</feature>
<proteinExistence type="evidence at transcript level"/>
<dbReference type="EC" id="3.1.3.2"/>
<dbReference type="EMBL" id="M11857">
    <property type="protein sequence ID" value="AAA35321.1"/>
    <property type="molecule type" value="Genomic_DNA"/>
</dbReference>
<dbReference type="EMBL" id="CU329671">
    <property type="protein sequence ID" value="CAB68657.1"/>
    <property type="molecule type" value="Genomic_DNA"/>
</dbReference>
<dbReference type="EMBL" id="AB027949">
    <property type="protein sequence ID" value="BAA87253.1"/>
    <property type="molecule type" value="Genomic_DNA"/>
</dbReference>
<dbReference type="PIR" id="A25326">
    <property type="entry name" value="A25326"/>
</dbReference>
<dbReference type="RefSeq" id="NP_596847.1">
    <property type="nucleotide sequence ID" value="NM_001023870.2"/>
</dbReference>
<dbReference type="SMR" id="P08091"/>
<dbReference type="BioGRID" id="277850">
    <property type="interactions" value="21"/>
</dbReference>
<dbReference type="FunCoup" id="P08091">
    <property type="interactions" value="223"/>
</dbReference>
<dbReference type="STRING" id="284812.P08091"/>
<dbReference type="GlyCosmos" id="P08091">
    <property type="glycosylation" value="9 sites, No reported glycans"/>
</dbReference>
<dbReference type="iPTMnet" id="P08091"/>
<dbReference type="PaxDb" id="4896-SPBP4G3.02.1"/>
<dbReference type="EnsemblFungi" id="SPBP4G3.02.1">
    <property type="protein sequence ID" value="SPBP4G3.02.1:pep"/>
    <property type="gene ID" value="SPBP4G3.02"/>
</dbReference>
<dbReference type="PomBase" id="SPBP4G3.02">
    <property type="gene designation" value="pho1"/>
</dbReference>
<dbReference type="VEuPathDB" id="FungiDB:SPBP4G3.02"/>
<dbReference type="eggNOG" id="KOG1382">
    <property type="taxonomic scope" value="Eukaryota"/>
</dbReference>
<dbReference type="HOGENOM" id="CLU_020880_3_1_1"/>
<dbReference type="InParanoid" id="P08091"/>
<dbReference type="OMA" id="YERYHEL"/>
<dbReference type="PhylomeDB" id="P08091"/>
<dbReference type="PRO" id="PR:P08091"/>
<dbReference type="Proteomes" id="UP000002485">
    <property type="component" value="Chromosome II"/>
</dbReference>
<dbReference type="GO" id="GO:0030287">
    <property type="term" value="C:cell wall-bounded periplasmic space"/>
    <property type="evidence" value="ECO:0000314"/>
    <property type="project" value="PomBase"/>
</dbReference>
<dbReference type="GO" id="GO:0005737">
    <property type="term" value="C:cytoplasm"/>
    <property type="evidence" value="ECO:0000314"/>
    <property type="project" value="PomBase"/>
</dbReference>
<dbReference type="GO" id="GO:0005576">
    <property type="term" value="C:extracellular region"/>
    <property type="evidence" value="ECO:0000314"/>
    <property type="project" value="PomBase"/>
</dbReference>
<dbReference type="GO" id="GO:0009277">
    <property type="term" value="C:fungal-type cell wall"/>
    <property type="evidence" value="ECO:0000266"/>
    <property type="project" value="PomBase"/>
</dbReference>
<dbReference type="GO" id="GO:0003993">
    <property type="term" value="F:acid phosphatase activity"/>
    <property type="evidence" value="ECO:0000315"/>
    <property type="project" value="PomBase"/>
</dbReference>
<dbReference type="GO" id="GO:0016036">
    <property type="term" value="P:cellular response to phosphate starvation"/>
    <property type="evidence" value="ECO:0000315"/>
    <property type="project" value="PomBase"/>
</dbReference>
<dbReference type="GO" id="GO:0046434">
    <property type="term" value="P:organophosphate catabolic process"/>
    <property type="evidence" value="ECO:0000315"/>
    <property type="project" value="PomBase"/>
</dbReference>
<dbReference type="CDD" id="cd07061">
    <property type="entry name" value="HP_HAP_like"/>
    <property type="match status" value="1"/>
</dbReference>
<dbReference type="Gene3D" id="3.40.50.1240">
    <property type="entry name" value="Phosphoglycerate mutase-like"/>
    <property type="match status" value="1"/>
</dbReference>
<dbReference type="InterPro" id="IPR033379">
    <property type="entry name" value="Acid_Pase_AS"/>
</dbReference>
<dbReference type="InterPro" id="IPR000560">
    <property type="entry name" value="His_Pase_clade-2"/>
</dbReference>
<dbReference type="InterPro" id="IPR029033">
    <property type="entry name" value="His_PPase_superfam"/>
</dbReference>
<dbReference type="InterPro" id="IPR016274">
    <property type="entry name" value="Histidine_acid_Pase_euk"/>
</dbReference>
<dbReference type="PANTHER" id="PTHR20963:SF18">
    <property type="entry name" value="ACID PHOSPHATASE PHO11-RELATED"/>
    <property type="match status" value="1"/>
</dbReference>
<dbReference type="PANTHER" id="PTHR20963">
    <property type="entry name" value="MULTIPLE INOSITOL POLYPHOSPHATE PHOSPHATASE-RELATED"/>
    <property type="match status" value="1"/>
</dbReference>
<dbReference type="Pfam" id="PF00328">
    <property type="entry name" value="His_Phos_2"/>
    <property type="match status" value="1"/>
</dbReference>
<dbReference type="PIRSF" id="PIRSF000894">
    <property type="entry name" value="Acid_phosphatase"/>
    <property type="match status" value="1"/>
</dbReference>
<dbReference type="SUPFAM" id="SSF53254">
    <property type="entry name" value="Phosphoglycerate mutase-like"/>
    <property type="match status" value="1"/>
</dbReference>
<dbReference type="PROSITE" id="PS00616">
    <property type="entry name" value="HIS_ACID_PHOSPHAT_1"/>
    <property type="match status" value="1"/>
</dbReference>
<dbReference type="PROSITE" id="PS00778">
    <property type="entry name" value="HIS_ACID_PHOSPHAT_2"/>
    <property type="match status" value="1"/>
</dbReference>